<reference key="1">
    <citation type="submission" date="2006-12" db="EMBL/GenBank/DDBJ databases">
        <authorList>
            <person name="Fouts D.E."/>
            <person name="Nelson K.E."/>
            <person name="Sebastian Y."/>
        </authorList>
    </citation>
    <scope>NUCLEOTIDE SEQUENCE [LARGE SCALE GENOMIC DNA]</scope>
    <source>
        <strain>81-176</strain>
    </source>
</reference>
<accession>A1VY95</accession>
<feature type="chain" id="PRO_1000147289" description="Nucleotide-binding protein CJJ81176_0398">
    <location>
        <begin position="1"/>
        <end position="163"/>
    </location>
</feature>
<proteinExistence type="inferred from homology"/>
<dbReference type="EMBL" id="CP000538">
    <property type="protein sequence ID" value="EAQ73383.1"/>
    <property type="molecule type" value="Genomic_DNA"/>
</dbReference>
<dbReference type="RefSeq" id="WP_002857249.1">
    <property type="nucleotide sequence ID" value="NC_008787.1"/>
</dbReference>
<dbReference type="SMR" id="A1VY95"/>
<dbReference type="KEGG" id="cjj:CJJ81176_0398"/>
<dbReference type="eggNOG" id="COG1666">
    <property type="taxonomic scope" value="Bacteria"/>
</dbReference>
<dbReference type="HOGENOM" id="CLU_099839_1_0_7"/>
<dbReference type="Proteomes" id="UP000000646">
    <property type="component" value="Chromosome"/>
</dbReference>
<dbReference type="GO" id="GO:0005829">
    <property type="term" value="C:cytosol"/>
    <property type="evidence" value="ECO:0007669"/>
    <property type="project" value="TreeGrafter"/>
</dbReference>
<dbReference type="GO" id="GO:0000166">
    <property type="term" value="F:nucleotide binding"/>
    <property type="evidence" value="ECO:0007669"/>
    <property type="project" value="TreeGrafter"/>
</dbReference>
<dbReference type="CDD" id="cd11740">
    <property type="entry name" value="YajQ_like"/>
    <property type="match status" value="1"/>
</dbReference>
<dbReference type="Gene3D" id="3.30.70.860">
    <property type="match status" value="1"/>
</dbReference>
<dbReference type="Gene3D" id="3.30.70.990">
    <property type="entry name" value="YajQ-like, domain 2"/>
    <property type="match status" value="1"/>
</dbReference>
<dbReference type="HAMAP" id="MF_00632">
    <property type="entry name" value="YajQ"/>
    <property type="match status" value="1"/>
</dbReference>
<dbReference type="InterPro" id="IPR007551">
    <property type="entry name" value="DUF520"/>
</dbReference>
<dbReference type="InterPro" id="IPR035571">
    <property type="entry name" value="UPF0234-like_C"/>
</dbReference>
<dbReference type="InterPro" id="IPR035570">
    <property type="entry name" value="UPF0234_N"/>
</dbReference>
<dbReference type="InterPro" id="IPR036183">
    <property type="entry name" value="YajQ-like_sf"/>
</dbReference>
<dbReference type="NCBIfam" id="NF003819">
    <property type="entry name" value="PRK05412.1"/>
    <property type="match status" value="1"/>
</dbReference>
<dbReference type="PANTHER" id="PTHR30476">
    <property type="entry name" value="UPF0234 PROTEIN YAJQ"/>
    <property type="match status" value="1"/>
</dbReference>
<dbReference type="PANTHER" id="PTHR30476:SF0">
    <property type="entry name" value="UPF0234 PROTEIN YAJQ"/>
    <property type="match status" value="1"/>
</dbReference>
<dbReference type="Pfam" id="PF04461">
    <property type="entry name" value="DUF520"/>
    <property type="match status" value="1"/>
</dbReference>
<dbReference type="SUPFAM" id="SSF89963">
    <property type="entry name" value="YajQ-like"/>
    <property type="match status" value="2"/>
</dbReference>
<gene>
    <name type="ordered locus">CJJ81176_0398</name>
</gene>
<sequence length="163" mass="18320">MASEHSFDISAALDKQELKNAFEQAKKELDSRYDLKGIKCEIDLSEKENIFKLSSSSEGKLDVLKDIVISKLIKRGINPNAIKELSRESGAMFRLNLKANDAIDSENAKKINKAIKDSKLKVNSSIRGEEIRVVAKQIDDLQAVMKLVKELDLELNVSFKNLK</sequence>
<name>Y398_CAMJJ</name>
<evidence type="ECO:0000255" key="1">
    <source>
        <dbReference type="HAMAP-Rule" id="MF_00632"/>
    </source>
</evidence>
<organism>
    <name type="scientific">Campylobacter jejuni subsp. jejuni serotype O:23/36 (strain 81-176)</name>
    <dbReference type="NCBI Taxonomy" id="354242"/>
    <lineage>
        <taxon>Bacteria</taxon>
        <taxon>Pseudomonadati</taxon>
        <taxon>Campylobacterota</taxon>
        <taxon>Epsilonproteobacteria</taxon>
        <taxon>Campylobacterales</taxon>
        <taxon>Campylobacteraceae</taxon>
        <taxon>Campylobacter</taxon>
    </lineage>
</organism>
<comment type="function">
    <text evidence="1">Nucleotide-binding protein.</text>
</comment>
<comment type="similarity">
    <text evidence="1">Belongs to the YajQ family.</text>
</comment>
<keyword id="KW-0547">Nucleotide-binding</keyword>
<protein>
    <recommendedName>
        <fullName evidence="1">Nucleotide-binding protein CJJ81176_0398</fullName>
    </recommendedName>
</protein>